<keyword id="KW-1003">Cell membrane</keyword>
<keyword id="KW-0325">Glycoprotein</keyword>
<keyword id="KW-0336">GPI-anchor</keyword>
<keyword id="KW-0449">Lipoprotein</keyword>
<keyword id="KW-0472">Membrane</keyword>
<keyword id="KW-1185">Reference proteome</keyword>
<keyword id="KW-0732">Signal</keyword>
<name>LCL1_YEAST</name>
<dbReference type="EMBL" id="U39205">
    <property type="protein sequence ID" value="AAB68309.1"/>
    <property type="molecule type" value="Genomic_DNA"/>
</dbReference>
<dbReference type="EMBL" id="BK006949">
    <property type="protein sequence ID" value="DAA11374.1"/>
    <property type="molecule type" value="Genomic_DNA"/>
</dbReference>
<dbReference type="PIR" id="S60934">
    <property type="entry name" value="S60934"/>
</dbReference>
<dbReference type="RefSeq" id="NP_015269.1">
    <property type="nucleotide sequence ID" value="NM_001183870.1"/>
</dbReference>
<dbReference type="BioGRID" id="36124">
    <property type="interactions" value="84"/>
</dbReference>
<dbReference type="DIP" id="DIP-5555N"/>
<dbReference type="FunCoup" id="Q02786">
    <property type="interactions" value="50"/>
</dbReference>
<dbReference type="STRING" id="4932.YPL056C"/>
<dbReference type="PaxDb" id="4932-YPL056C"/>
<dbReference type="EnsemblFungi" id="YPL056C_mRNA">
    <property type="protein sequence ID" value="YPL056C"/>
    <property type="gene ID" value="YPL056C"/>
</dbReference>
<dbReference type="GeneID" id="856051"/>
<dbReference type="KEGG" id="sce:YPL056C"/>
<dbReference type="AGR" id="SGD:S000005977"/>
<dbReference type="SGD" id="S000005977">
    <property type="gene designation" value="LCL1"/>
</dbReference>
<dbReference type="VEuPathDB" id="FungiDB:YPL056C"/>
<dbReference type="HOGENOM" id="CLU_2293908_0_0_1"/>
<dbReference type="InParanoid" id="Q02786"/>
<dbReference type="OrthoDB" id="10342078at2759"/>
<dbReference type="BioCyc" id="YEAST:G3O-33968-MONOMER"/>
<dbReference type="BioGRID-ORCS" id="856051">
    <property type="hits" value="3 hits in 10 CRISPR screens"/>
</dbReference>
<dbReference type="PRO" id="PR:Q02786"/>
<dbReference type="Proteomes" id="UP000002311">
    <property type="component" value="Chromosome XVI"/>
</dbReference>
<dbReference type="RNAct" id="Q02786">
    <property type="molecule type" value="protein"/>
</dbReference>
<dbReference type="GO" id="GO:0005886">
    <property type="term" value="C:plasma membrane"/>
    <property type="evidence" value="ECO:0007669"/>
    <property type="project" value="UniProtKB-SubCell"/>
</dbReference>
<dbReference type="GO" id="GO:0098552">
    <property type="term" value="C:side of membrane"/>
    <property type="evidence" value="ECO:0007669"/>
    <property type="project" value="UniProtKB-KW"/>
</dbReference>
<proteinExistence type="inferred from homology"/>
<sequence length="101" mass="11332">MKNAALCEALPLLATCSHEIPPTPHTVCFVFPPALLLSPSKLTLLNSRRVASRCVIIIDPRLLRLFSCSRPQQLPRDKNQSFAKPSFSFFFFLLTSLLSPF</sequence>
<reference key="1">
    <citation type="journal article" date="1997" name="Nature">
        <title>The nucleotide sequence of Saccharomyces cerevisiae chromosome XVI.</title>
        <authorList>
            <person name="Bussey H."/>
            <person name="Storms R.K."/>
            <person name="Ahmed A."/>
            <person name="Albermann K."/>
            <person name="Allen E."/>
            <person name="Ansorge W."/>
            <person name="Araujo R."/>
            <person name="Aparicio A."/>
            <person name="Barrell B.G."/>
            <person name="Badcock K."/>
            <person name="Benes V."/>
            <person name="Botstein D."/>
            <person name="Bowman S."/>
            <person name="Brueckner M."/>
            <person name="Carpenter J."/>
            <person name="Cherry J.M."/>
            <person name="Chung E."/>
            <person name="Churcher C.M."/>
            <person name="Coster F."/>
            <person name="Davis K."/>
            <person name="Davis R.W."/>
            <person name="Dietrich F.S."/>
            <person name="Delius H."/>
            <person name="DiPaolo T."/>
            <person name="Dubois E."/>
            <person name="Duesterhoeft A."/>
            <person name="Duncan M."/>
            <person name="Floeth M."/>
            <person name="Fortin N."/>
            <person name="Friesen J.D."/>
            <person name="Fritz C."/>
            <person name="Goffeau A."/>
            <person name="Hall J."/>
            <person name="Hebling U."/>
            <person name="Heumann K."/>
            <person name="Hilbert H."/>
            <person name="Hillier L.W."/>
            <person name="Hunicke-Smith S."/>
            <person name="Hyman R.W."/>
            <person name="Johnston M."/>
            <person name="Kalman S."/>
            <person name="Kleine K."/>
            <person name="Komp C."/>
            <person name="Kurdi O."/>
            <person name="Lashkari D."/>
            <person name="Lew H."/>
            <person name="Lin A."/>
            <person name="Lin D."/>
            <person name="Louis E.J."/>
            <person name="Marathe R."/>
            <person name="Messenguy F."/>
            <person name="Mewes H.-W."/>
            <person name="Mirtipati S."/>
            <person name="Moestl D."/>
            <person name="Mueller-Auer S."/>
            <person name="Namath A."/>
            <person name="Nentwich U."/>
            <person name="Oefner P."/>
            <person name="Pearson D."/>
            <person name="Petel F.X."/>
            <person name="Pohl T.M."/>
            <person name="Purnelle B."/>
            <person name="Rajandream M.A."/>
            <person name="Rechmann S."/>
            <person name="Rieger M."/>
            <person name="Riles L."/>
            <person name="Roberts D."/>
            <person name="Schaefer M."/>
            <person name="Scharfe M."/>
            <person name="Scherens B."/>
            <person name="Schramm S."/>
            <person name="Schroeder M."/>
            <person name="Sdicu A.-M."/>
            <person name="Tettelin H."/>
            <person name="Urrestarazu L.A."/>
            <person name="Ushinsky S."/>
            <person name="Vierendeels F."/>
            <person name="Vissers S."/>
            <person name="Voss H."/>
            <person name="Walsh S.V."/>
            <person name="Wambutt R."/>
            <person name="Wang Y."/>
            <person name="Wedler E."/>
            <person name="Wedler H."/>
            <person name="Winnett E."/>
            <person name="Zhong W.-W."/>
            <person name="Zollner A."/>
            <person name="Vo D.H."/>
            <person name="Hani J."/>
        </authorList>
    </citation>
    <scope>NUCLEOTIDE SEQUENCE [LARGE SCALE GENOMIC DNA]</scope>
    <source>
        <strain>ATCC 204508 / S288c</strain>
    </source>
</reference>
<reference key="2">
    <citation type="journal article" date="2014" name="G3 (Bethesda)">
        <title>The reference genome sequence of Saccharomyces cerevisiae: Then and now.</title>
        <authorList>
            <person name="Engel S.R."/>
            <person name="Dietrich F.S."/>
            <person name="Fisk D.G."/>
            <person name="Binkley G."/>
            <person name="Balakrishnan R."/>
            <person name="Costanzo M.C."/>
            <person name="Dwight S.S."/>
            <person name="Hitz B.C."/>
            <person name="Karra K."/>
            <person name="Nash R.S."/>
            <person name="Weng S."/>
            <person name="Wong E.D."/>
            <person name="Lloyd P."/>
            <person name="Skrzypek M.S."/>
            <person name="Miyasato S.R."/>
            <person name="Simison M."/>
            <person name="Cherry J.M."/>
        </authorList>
    </citation>
    <scope>GENOME REANNOTATION</scope>
    <source>
        <strain>ATCC 204508 / S288c</strain>
    </source>
</reference>
<reference key="3">
    <citation type="journal article" date="2003" name="Genetics">
        <title>Mode of selection and experimental evolution of antifungal drug resistance in Saccharomyces cerevisiae.</title>
        <authorList>
            <person name="Anderson J.B."/>
            <person name="Sirjusingh C."/>
            <person name="Parsons A.B."/>
            <person name="Boone C."/>
            <person name="Wickens C."/>
            <person name="Cowen L.E."/>
            <person name="Kohn L.M."/>
        </authorList>
    </citation>
    <scope>FLUCONAZOLE RESISTANCE OF DELETION</scope>
</reference>
<reference key="4">
    <citation type="journal article" date="2010" name="PLoS Genet.">
        <title>A microarray-based genetic screen for yeast chronological aging factors.</title>
        <authorList>
            <person name="Matecic M."/>
            <person name="Smith D.L."/>
            <person name="Pan X."/>
            <person name="Maqani N."/>
            <person name="Bekiranov S."/>
            <person name="Boeke J.D."/>
            <person name="Smith J.S."/>
        </authorList>
    </citation>
    <scope>DISRUPTION PHENOTYPE</scope>
</reference>
<comment type="subcellular location">
    <subcellularLocation>
        <location evidence="3">Cell membrane</location>
        <topology evidence="3">Lipid-anchor</topology>
        <topology evidence="3">GPI-anchor</topology>
    </subcellularLocation>
</comment>
<comment type="disruption phenotype">
    <text evidence="2">Leads to long chronological lifespan.</text>
</comment>
<comment type="miscellaneous">
    <text>Deletion leads to fluconazole resistance.</text>
</comment>
<evidence type="ECO:0000255" key="1"/>
<evidence type="ECO:0000269" key="2">
    <source>
    </source>
</evidence>
<evidence type="ECO:0000305" key="3"/>
<accession>Q02786</accession>
<accession>D6W3V8</accession>
<gene>
    <name type="primary">LCL1</name>
    <name type="ordered locus">YPL056C</name>
</gene>
<organism>
    <name type="scientific">Saccharomyces cerevisiae (strain ATCC 204508 / S288c)</name>
    <name type="common">Baker's yeast</name>
    <dbReference type="NCBI Taxonomy" id="559292"/>
    <lineage>
        <taxon>Eukaryota</taxon>
        <taxon>Fungi</taxon>
        <taxon>Dikarya</taxon>
        <taxon>Ascomycota</taxon>
        <taxon>Saccharomycotina</taxon>
        <taxon>Saccharomycetes</taxon>
        <taxon>Saccharomycetales</taxon>
        <taxon>Saccharomycetaceae</taxon>
        <taxon>Saccharomyces</taxon>
    </lineage>
</organism>
<feature type="signal peptide" evidence="1">
    <location>
        <begin position="1"/>
        <end position="17"/>
    </location>
</feature>
<feature type="chain" id="PRO_0000238639" description="Long chronological lifespan protein 1">
    <location>
        <begin position="18"/>
        <end position="81"/>
    </location>
</feature>
<feature type="propeptide" id="PRO_0000238640" description="Removed in mature form" evidence="1">
    <location>
        <begin position="82"/>
        <end position="101"/>
    </location>
</feature>
<feature type="lipid moiety-binding region" description="GPI-anchor amidated serine" evidence="1">
    <location>
        <position position="81"/>
    </location>
</feature>
<protein>
    <recommendedName>
        <fullName>Long chronological lifespan protein 1</fullName>
    </recommendedName>
</protein>